<evidence type="ECO:0000250" key="1"/>
<evidence type="ECO:0000250" key="2">
    <source>
        <dbReference type="UniProtKB" id="P28052"/>
    </source>
</evidence>
<evidence type="ECO:0000255" key="3"/>
<evidence type="ECO:0000255" key="4">
    <source>
        <dbReference type="PROSITE-ProRule" id="PRU01230"/>
    </source>
</evidence>
<evidence type="ECO:0000305" key="5"/>
<reference key="1">
    <citation type="journal article" date="2005" name="Mol. Genet. Genomics">
        <title>Functional constraint and divergence in the G protein family in Caenorhabditis elegans and Caenorhabditis briggsae.</title>
        <authorList>
            <person name="Jovelin R."/>
            <person name="Phillips P.C."/>
        </authorList>
    </citation>
    <scope>NUCLEOTIDE SEQUENCE [GENOMIC DNA]</scope>
    <source>
        <strain>AF16</strain>
    </source>
</reference>
<reference key="2">
    <citation type="journal article" date="2003" name="PLoS Biol.">
        <title>The genome sequence of Caenorhabditis briggsae: a platform for comparative genomics.</title>
        <authorList>
            <person name="Stein L.D."/>
            <person name="Bao Z."/>
            <person name="Blasiar D."/>
            <person name="Blumenthal T."/>
            <person name="Brent M.R."/>
            <person name="Chen N."/>
            <person name="Chinwalla A."/>
            <person name="Clarke L."/>
            <person name="Clee C."/>
            <person name="Coghlan A."/>
            <person name="Coulson A."/>
            <person name="D'Eustachio P."/>
            <person name="Fitch D.H.A."/>
            <person name="Fulton L.A."/>
            <person name="Fulton R.E."/>
            <person name="Griffiths-Jones S."/>
            <person name="Harris T.W."/>
            <person name="Hillier L.W."/>
            <person name="Kamath R."/>
            <person name="Kuwabara P.E."/>
            <person name="Mardis E.R."/>
            <person name="Marra M.A."/>
            <person name="Miner T.L."/>
            <person name="Minx P."/>
            <person name="Mullikin J.C."/>
            <person name="Plumb R.W."/>
            <person name="Rogers J."/>
            <person name="Schein J.E."/>
            <person name="Sohrmann M."/>
            <person name="Spieth J."/>
            <person name="Stajich J.E."/>
            <person name="Wei C."/>
            <person name="Willey D."/>
            <person name="Wilson R.K."/>
            <person name="Durbin R.M."/>
            <person name="Waterston R.H."/>
        </authorList>
    </citation>
    <scope>NUCLEOTIDE SEQUENCE [LARGE SCALE GENOMIC DNA]</scope>
    <source>
        <strain>AF16</strain>
    </source>
</reference>
<name>GPA3_CAEBR</name>
<gene>
    <name type="primary">gpa-3</name>
    <name type="ORF">CBG19263</name>
</gene>
<comment type="function">
    <text evidence="2">Guanine nucleotide-binding proteins (G proteins) are involved as modulators or transducers in various transmembrane signaling systems. Promotes transcription of 3',5'-cyclic phosphodiesterases pde-1 and pde-5, leading to reduced cGMP levels in sensory neurons. This causes suppression of insulin production and signaling which leads to increased daf-16 activity and contributes to increased adult lifespan and resistance to oxidative stress. In addition, by reducing cGMP levels, inhibits TGF-beta signaling pathways. Involved in behavioral response to P.aeruginosa by controlling the expression of daf-7, a member of the TGF-beta family, in ASJ sensory neurons.</text>
</comment>
<comment type="subunit">
    <text>G proteins are composed of 3 units; alpha, beta and gamma. The alpha chain contains the guanine nucleotide binding site.</text>
</comment>
<comment type="similarity">
    <text evidence="5">Belongs to the G-alpha family. G(q) subfamily.</text>
</comment>
<accession>Q60W52</accession>
<accession>A8XV79</accession>
<keyword id="KW-0342">GTP-binding</keyword>
<keyword id="KW-0449">Lipoprotein</keyword>
<keyword id="KW-0460">Magnesium</keyword>
<keyword id="KW-0479">Metal-binding</keyword>
<keyword id="KW-0519">Myristate</keyword>
<keyword id="KW-0547">Nucleotide-binding</keyword>
<keyword id="KW-0564">Palmitate</keyword>
<keyword id="KW-1185">Reference proteome</keyword>
<keyword id="KW-0807">Transducer</keyword>
<protein>
    <recommendedName>
        <fullName>Guanine nucleotide-binding protein alpha-3 subunit</fullName>
    </recommendedName>
</protein>
<organism>
    <name type="scientific">Caenorhabditis briggsae</name>
    <dbReference type="NCBI Taxonomy" id="6238"/>
    <lineage>
        <taxon>Eukaryota</taxon>
        <taxon>Metazoa</taxon>
        <taxon>Ecdysozoa</taxon>
        <taxon>Nematoda</taxon>
        <taxon>Chromadorea</taxon>
        <taxon>Rhabditida</taxon>
        <taxon>Rhabditina</taxon>
        <taxon>Rhabditomorpha</taxon>
        <taxon>Rhabditoidea</taxon>
        <taxon>Rhabditidae</taxon>
        <taxon>Peloderinae</taxon>
        <taxon>Caenorhabditis</taxon>
    </lineage>
</organism>
<feature type="initiator methionine" description="Removed" evidence="3">
    <location>
        <position position="1"/>
    </location>
</feature>
<feature type="chain" id="PRO_0000203632" description="Guanine nucleotide-binding protein alpha-3 subunit">
    <location>
        <begin position="2"/>
        <end position="354"/>
    </location>
</feature>
<feature type="domain" description="G-alpha" evidence="4">
    <location>
        <begin position="32"/>
        <end position="354"/>
    </location>
</feature>
<feature type="region of interest" description="G1 motif" evidence="4">
    <location>
        <begin position="35"/>
        <end position="48"/>
    </location>
</feature>
<feature type="region of interest" description="G2 motif" evidence="4">
    <location>
        <begin position="174"/>
        <end position="182"/>
    </location>
</feature>
<feature type="region of interest" description="G3 motif" evidence="4">
    <location>
        <begin position="197"/>
        <end position="206"/>
    </location>
</feature>
<feature type="region of interest" description="G4 motif" evidence="4">
    <location>
        <begin position="266"/>
        <end position="273"/>
    </location>
</feature>
<feature type="region of interest" description="G5 motif" evidence="4">
    <location>
        <begin position="324"/>
        <end position="329"/>
    </location>
</feature>
<feature type="binding site" evidence="1">
    <location>
        <begin position="40"/>
        <end position="47"/>
    </location>
    <ligand>
        <name>GTP</name>
        <dbReference type="ChEBI" id="CHEBI:37565"/>
    </ligand>
</feature>
<feature type="binding site" evidence="1">
    <location>
        <position position="47"/>
    </location>
    <ligand>
        <name>Mg(2+)</name>
        <dbReference type="ChEBI" id="CHEBI:18420"/>
    </ligand>
</feature>
<feature type="binding site" evidence="1">
    <location>
        <begin position="176"/>
        <end position="182"/>
    </location>
    <ligand>
        <name>GTP</name>
        <dbReference type="ChEBI" id="CHEBI:37565"/>
    </ligand>
</feature>
<feature type="binding site" evidence="1">
    <location>
        <position position="182"/>
    </location>
    <ligand>
        <name>Mg(2+)</name>
        <dbReference type="ChEBI" id="CHEBI:18420"/>
    </ligand>
</feature>
<feature type="binding site" evidence="1">
    <location>
        <begin position="201"/>
        <end position="205"/>
    </location>
    <ligand>
        <name>GTP</name>
        <dbReference type="ChEBI" id="CHEBI:37565"/>
    </ligand>
</feature>
<feature type="binding site" evidence="1">
    <location>
        <begin position="270"/>
        <end position="273"/>
    </location>
    <ligand>
        <name>GTP</name>
        <dbReference type="ChEBI" id="CHEBI:37565"/>
    </ligand>
</feature>
<feature type="binding site" evidence="1">
    <location>
        <position position="326"/>
    </location>
    <ligand>
        <name>GTP</name>
        <dbReference type="ChEBI" id="CHEBI:37565"/>
    </ligand>
</feature>
<feature type="lipid moiety-binding region" description="N-myristoyl glycine" evidence="3">
    <location>
        <position position="2"/>
    </location>
</feature>
<feature type="lipid moiety-binding region" description="S-palmitoyl cysteine" evidence="3">
    <location>
        <position position="4"/>
    </location>
</feature>
<dbReference type="EMBL" id="AY634296">
    <property type="protein sequence ID" value="AAW02902.1"/>
    <property type="molecule type" value="Genomic_DNA"/>
</dbReference>
<dbReference type="EMBL" id="HE601047">
    <property type="protein sequence ID" value="CAP36546.1"/>
    <property type="molecule type" value="Genomic_DNA"/>
</dbReference>
<dbReference type="SMR" id="Q60W52"/>
<dbReference type="FunCoup" id="Q60W52">
    <property type="interactions" value="56"/>
</dbReference>
<dbReference type="STRING" id="6238.Q60W52"/>
<dbReference type="KEGG" id="cbr:CBG_19263"/>
<dbReference type="CTD" id="8579533"/>
<dbReference type="WormBase" id="CBG19263">
    <property type="protein sequence ID" value="CBP44703"/>
    <property type="gene ID" value="WBGene00038517"/>
    <property type="gene designation" value="Cbr-gpa-3"/>
</dbReference>
<dbReference type="eggNOG" id="KOG0082">
    <property type="taxonomic scope" value="Eukaryota"/>
</dbReference>
<dbReference type="HOGENOM" id="CLU_014184_6_0_1"/>
<dbReference type="InParanoid" id="Q60W52"/>
<dbReference type="OMA" id="QVQMILD"/>
<dbReference type="Proteomes" id="UP000008549">
    <property type="component" value="Unassembled WGS sequence"/>
</dbReference>
<dbReference type="GO" id="GO:0005737">
    <property type="term" value="C:cytoplasm"/>
    <property type="evidence" value="ECO:0000318"/>
    <property type="project" value="GO_Central"/>
</dbReference>
<dbReference type="GO" id="GO:0005834">
    <property type="term" value="C:heterotrimeric G-protein complex"/>
    <property type="evidence" value="ECO:0000318"/>
    <property type="project" value="GO_Central"/>
</dbReference>
<dbReference type="GO" id="GO:0001664">
    <property type="term" value="F:G protein-coupled receptor binding"/>
    <property type="evidence" value="ECO:0000318"/>
    <property type="project" value="GO_Central"/>
</dbReference>
<dbReference type="GO" id="GO:0031683">
    <property type="term" value="F:G-protein beta/gamma-subunit complex binding"/>
    <property type="evidence" value="ECO:0000318"/>
    <property type="project" value="GO_Central"/>
</dbReference>
<dbReference type="GO" id="GO:0005525">
    <property type="term" value="F:GTP binding"/>
    <property type="evidence" value="ECO:0007669"/>
    <property type="project" value="UniProtKB-KW"/>
</dbReference>
<dbReference type="GO" id="GO:0003924">
    <property type="term" value="F:GTPase activity"/>
    <property type="evidence" value="ECO:0000318"/>
    <property type="project" value="GO_Central"/>
</dbReference>
<dbReference type="GO" id="GO:0046872">
    <property type="term" value="F:metal ion binding"/>
    <property type="evidence" value="ECO:0007669"/>
    <property type="project" value="UniProtKB-KW"/>
</dbReference>
<dbReference type="GO" id="GO:0007188">
    <property type="term" value="P:adenylate cyclase-modulating G protein-coupled receptor signaling pathway"/>
    <property type="evidence" value="ECO:0000318"/>
    <property type="project" value="GO_Central"/>
</dbReference>
<dbReference type="CDD" id="cd00066">
    <property type="entry name" value="G-alpha"/>
    <property type="match status" value="1"/>
</dbReference>
<dbReference type="FunFam" id="1.10.400.10:FF:000011">
    <property type="entry name" value="Guanine nucleotide-binding protein alpha-1 subunit"/>
    <property type="match status" value="1"/>
</dbReference>
<dbReference type="FunFam" id="3.40.50.300:FF:000041">
    <property type="entry name" value="Guanine nucleotide-binding protein G(I) subunit alpha"/>
    <property type="match status" value="1"/>
</dbReference>
<dbReference type="FunFam" id="3.40.50.300:FF:000692">
    <property type="entry name" value="Guanine nucleotide-binding protein subunit alpha"/>
    <property type="match status" value="1"/>
</dbReference>
<dbReference type="Gene3D" id="1.10.400.10">
    <property type="entry name" value="GI Alpha 1, domain 2-like"/>
    <property type="match status" value="1"/>
</dbReference>
<dbReference type="Gene3D" id="3.40.50.300">
    <property type="entry name" value="P-loop containing nucleotide triphosphate hydrolases"/>
    <property type="match status" value="1"/>
</dbReference>
<dbReference type="InterPro" id="IPR001408">
    <property type="entry name" value="Gprotein_alpha_I"/>
</dbReference>
<dbReference type="InterPro" id="IPR001019">
    <property type="entry name" value="Gprotein_alpha_su"/>
</dbReference>
<dbReference type="InterPro" id="IPR011025">
    <property type="entry name" value="GproteinA_insert"/>
</dbReference>
<dbReference type="InterPro" id="IPR027417">
    <property type="entry name" value="P-loop_NTPase"/>
</dbReference>
<dbReference type="PANTHER" id="PTHR10218">
    <property type="entry name" value="GTP-BINDING PROTEIN ALPHA SUBUNIT"/>
    <property type="match status" value="1"/>
</dbReference>
<dbReference type="PANTHER" id="PTHR10218:SF245">
    <property type="entry name" value="GUANINE NUCLEOTIDE-BINDING PROTEIN ALPHA-2 SUBUNIT-RELATED"/>
    <property type="match status" value="1"/>
</dbReference>
<dbReference type="Pfam" id="PF00503">
    <property type="entry name" value="G-alpha"/>
    <property type="match status" value="1"/>
</dbReference>
<dbReference type="PRINTS" id="PR00318">
    <property type="entry name" value="GPROTEINA"/>
</dbReference>
<dbReference type="PRINTS" id="PR00441">
    <property type="entry name" value="GPROTEINAI"/>
</dbReference>
<dbReference type="SMART" id="SM00275">
    <property type="entry name" value="G_alpha"/>
    <property type="match status" value="1"/>
</dbReference>
<dbReference type="SUPFAM" id="SSF52540">
    <property type="entry name" value="P-loop containing nucleoside triphosphate hydrolases"/>
    <property type="match status" value="1"/>
</dbReference>
<dbReference type="SUPFAM" id="SSF47895">
    <property type="entry name" value="Transducin (alpha subunit), insertion domain"/>
    <property type="match status" value="1"/>
</dbReference>
<dbReference type="PROSITE" id="PS51882">
    <property type="entry name" value="G_ALPHA"/>
    <property type="match status" value="1"/>
</dbReference>
<sequence length="354" mass="40434">MGLCQSAEDKELTLKSKAIDKEMMANHMSQAKVVKLLLLGAGECGKSTVLKQMRILHDHGFTAEESEQQKSVVFNNTLQAMISILKGMESLRMTFDKPIRENDAKFVMEAHKMLQEAKVFPEELANALQALYSDKGIQTVMAKGNEFQMPESAPHFLGSLDRIKLPDYTPTEQDILLSRIKTTGIVEVKFQMKSVDFRVFDVGGQRSERKKWIHCFEDVNAIIFIAAISEYDQVLFEDETTNRMIESMRLFESICNSRWFINTSMILFLNKKDLFAEKIKRTSIKSAFPDYKGAQTYDESCRYIEEKFDGLNANPEKTIYMHQTCATDTDQVQMILDSVIDMIIQANLQGCGLY</sequence>
<proteinExistence type="inferred from homology"/>